<comment type="function">
    <text evidence="1">Required for maturation of 30S ribosomal subunits.</text>
</comment>
<comment type="subcellular location">
    <subcellularLocation>
        <location evidence="1">Cytoplasm</location>
    </subcellularLocation>
</comment>
<comment type="similarity">
    <text evidence="1">Belongs to the RimP family.</text>
</comment>
<gene>
    <name evidence="1" type="primary">rimP</name>
    <name type="ordered locus">PMT9312_1584</name>
</gene>
<feature type="chain" id="PRO_0000229261" description="Ribosome maturation factor RimP">
    <location>
        <begin position="1"/>
        <end position="155"/>
    </location>
</feature>
<dbReference type="EMBL" id="CP000111">
    <property type="protein sequence ID" value="ABB50644.1"/>
    <property type="molecule type" value="Genomic_DNA"/>
</dbReference>
<dbReference type="RefSeq" id="WP_011377126.1">
    <property type="nucleotide sequence ID" value="NC_007577.1"/>
</dbReference>
<dbReference type="SMR" id="Q318Q1"/>
<dbReference type="STRING" id="74546.PMT9312_1584"/>
<dbReference type="KEGG" id="pmi:PMT9312_1584"/>
<dbReference type="eggNOG" id="COG0779">
    <property type="taxonomic scope" value="Bacteria"/>
</dbReference>
<dbReference type="HOGENOM" id="CLU_070525_2_1_3"/>
<dbReference type="OrthoDB" id="9805006at2"/>
<dbReference type="Proteomes" id="UP000002715">
    <property type="component" value="Chromosome"/>
</dbReference>
<dbReference type="GO" id="GO:0005829">
    <property type="term" value="C:cytosol"/>
    <property type="evidence" value="ECO:0007669"/>
    <property type="project" value="TreeGrafter"/>
</dbReference>
<dbReference type="GO" id="GO:0000028">
    <property type="term" value="P:ribosomal small subunit assembly"/>
    <property type="evidence" value="ECO:0007669"/>
    <property type="project" value="TreeGrafter"/>
</dbReference>
<dbReference type="GO" id="GO:0006412">
    <property type="term" value="P:translation"/>
    <property type="evidence" value="ECO:0007669"/>
    <property type="project" value="TreeGrafter"/>
</dbReference>
<dbReference type="Gene3D" id="2.30.30.180">
    <property type="entry name" value="Ribosome maturation factor RimP, C-terminal domain"/>
    <property type="match status" value="1"/>
</dbReference>
<dbReference type="Gene3D" id="3.30.300.70">
    <property type="entry name" value="RimP-like superfamily, N-terminal"/>
    <property type="match status" value="1"/>
</dbReference>
<dbReference type="HAMAP" id="MF_01077">
    <property type="entry name" value="RimP"/>
    <property type="match status" value="1"/>
</dbReference>
<dbReference type="InterPro" id="IPR003728">
    <property type="entry name" value="Ribosome_maturation_RimP"/>
</dbReference>
<dbReference type="InterPro" id="IPR036847">
    <property type="entry name" value="RimP_C_sf"/>
</dbReference>
<dbReference type="InterPro" id="IPR028989">
    <property type="entry name" value="RimP_N"/>
</dbReference>
<dbReference type="InterPro" id="IPR035956">
    <property type="entry name" value="RimP_N_sf"/>
</dbReference>
<dbReference type="NCBIfam" id="NF011240">
    <property type="entry name" value="PRK14646.1"/>
    <property type="match status" value="1"/>
</dbReference>
<dbReference type="PANTHER" id="PTHR33867">
    <property type="entry name" value="RIBOSOME MATURATION FACTOR RIMP"/>
    <property type="match status" value="1"/>
</dbReference>
<dbReference type="PANTHER" id="PTHR33867:SF1">
    <property type="entry name" value="RIBOSOME MATURATION FACTOR RIMP"/>
    <property type="match status" value="1"/>
</dbReference>
<dbReference type="Pfam" id="PF02576">
    <property type="entry name" value="RimP_N"/>
    <property type="match status" value="1"/>
</dbReference>
<dbReference type="SUPFAM" id="SSF74942">
    <property type="entry name" value="YhbC-like, C-terminal domain"/>
    <property type="match status" value="1"/>
</dbReference>
<dbReference type="SUPFAM" id="SSF75420">
    <property type="entry name" value="YhbC-like, N-terminal domain"/>
    <property type="match status" value="1"/>
</dbReference>
<proteinExistence type="inferred from homology"/>
<name>RIMP_PROM9</name>
<protein>
    <recommendedName>
        <fullName evidence="1">Ribosome maturation factor RimP</fullName>
    </recommendedName>
</protein>
<accession>Q318Q1</accession>
<organism>
    <name type="scientific">Prochlorococcus marinus (strain MIT 9312)</name>
    <dbReference type="NCBI Taxonomy" id="74546"/>
    <lineage>
        <taxon>Bacteria</taxon>
        <taxon>Bacillati</taxon>
        <taxon>Cyanobacteriota</taxon>
        <taxon>Cyanophyceae</taxon>
        <taxon>Synechococcales</taxon>
        <taxon>Prochlorococcaceae</taxon>
        <taxon>Prochlorococcus</taxon>
    </lineage>
</organism>
<evidence type="ECO:0000255" key="1">
    <source>
        <dbReference type="HAMAP-Rule" id="MF_01077"/>
    </source>
</evidence>
<reference key="1">
    <citation type="journal article" date="2006" name="Science">
        <title>Genomic islands and the ecology and evolution of Prochlorococcus.</title>
        <authorList>
            <person name="Coleman M.L."/>
            <person name="Sullivan M.B."/>
            <person name="Martiny A.C."/>
            <person name="Steglich C."/>
            <person name="Barry K."/>
            <person name="Delong E.F."/>
            <person name="Chisholm S.W."/>
        </authorList>
    </citation>
    <scope>NUCLEOTIDE SEQUENCE [LARGE SCALE GENOMIC DNA]</scope>
    <source>
        <strain>MIT 9312</strain>
    </source>
</reference>
<sequence>MNKEQKSRLENLLEKVANVLDYKICSVNLQTNQNPIVIKIIIKKTNGDDISLDDCALFNTPASEEIENSNLLKCSYVLEISSQGVSDELTSERDFKTFKGFPVNVELNQKNSKIKFLNGLLYEKSKDYLAINIKGKIKKIPFNEVLKISLCTLKD</sequence>
<keyword id="KW-0963">Cytoplasm</keyword>
<keyword id="KW-0690">Ribosome biogenesis</keyword>